<gene>
    <name evidence="1" type="primary">rplE</name>
    <name evidence="1" type="synonym">rpl5</name>
    <name type="ordered locus">PMM1546</name>
</gene>
<protein>
    <recommendedName>
        <fullName evidence="1">Large ribosomal subunit protein uL5</fullName>
    </recommendedName>
    <alternativeName>
        <fullName evidence="2">50S ribosomal protein L5</fullName>
    </alternativeName>
</protein>
<evidence type="ECO:0000255" key="1">
    <source>
        <dbReference type="HAMAP-Rule" id="MF_01333"/>
    </source>
</evidence>
<evidence type="ECO:0000305" key="2"/>
<sequence length="178" mass="19732">MTLKTRYKEAIRPKLLKDLGLKNIHQVPKVIKVNVNRGLGEAASNSKALEASLNEMATITGQKALVTRSKKAIAGFKIREGMAIGCTVTLRGDRMYSFLERFINLALPRIRDFRGVNPKSFDGRGNYTLGVKEQLIFPEISFDKIDSIRGMDITIVTSASTDQEGKALLKELGMPFSN</sequence>
<organism>
    <name type="scientific">Prochlorococcus marinus subsp. pastoris (strain CCMP1986 / NIES-2087 / MED4)</name>
    <dbReference type="NCBI Taxonomy" id="59919"/>
    <lineage>
        <taxon>Bacteria</taxon>
        <taxon>Bacillati</taxon>
        <taxon>Cyanobacteriota</taxon>
        <taxon>Cyanophyceae</taxon>
        <taxon>Synechococcales</taxon>
        <taxon>Prochlorococcaceae</taxon>
        <taxon>Prochlorococcus</taxon>
    </lineage>
</organism>
<name>RL5_PROMP</name>
<reference key="1">
    <citation type="journal article" date="2003" name="Nature">
        <title>Genome divergence in two Prochlorococcus ecotypes reflects oceanic niche differentiation.</title>
        <authorList>
            <person name="Rocap G."/>
            <person name="Larimer F.W."/>
            <person name="Lamerdin J.E."/>
            <person name="Malfatti S."/>
            <person name="Chain P."/>
            <person name="Ahlgren N.A."/>
            <person name="Arellano A."/>
            <person name="Coleman M."/>
            <person name="Hauser L."/>
            <person name="Hess W.R."/>
            <person name="Johnson Z.I."/>
            <person name="Land M.L."/>
            <person name="Lindell D."/>
            <person name="Post A.F."/>
            <person name="Regala W."/>
            <person name="Shah M."/>
            <person name="Shaw S.L."/>
            <person name="Steglich C."/>
            <person name="Sullivan M.B."/>
            <person name="Ting C.S."/>
            <person name="Tolonen A."/>
            <person name="Webb E.A."/>
            <person name="Zinser E.R."/>
            <person name="Chisholm S.W."/>
        </authorList>
    </citation>
    <scope>NUCLEOTIDE SEQUENCE [LARGE SCALE GENOMIC DNA]</scope>
    <source>
        <strain>CCMP1986 / NIES-2087 / MED4</strain>
    </source>
</reference>
<accession>Q7UZV6</accession>
<comment type="function">
    <text evidence="1">This is one of the proteins that bind and probably mediate the attachment of the 5S RNA into the large ribosomal subunit, where it forms part of the central protuberance. In the 70S ribosome it contacts protein S13 of the 30S subunit (bridge B1b), connecting the 2 subunits; this bridge is implicated in subunit movement. Contacts the P site tRNA; the 5S rRNA and some of its associated proteins might help stabilize positioning of ribosome-bound tRNAs.</text>
</comment>
<comment type="subunit">
    <text evidence="1">Part of the 50S ribosomal subunit; part of the 5S rRNA/L5/L18/L25 subcomplex. Contacts the 5S rRNA and the P site tRNA. Forms a bridge to the 30S subunit in the 70S ribosome.</text>
</comment>
<comment type="similarity">
    <text evidence="1">Belongs to the universal ribosomal protein uL5 family.</text>
</comment>
<keyword id="KW-0687">Ribonucleoprotein</keyword>
<keyword id="KW-0689">Ribosomal protein</keyword>
<keyword id="KW-0694">RNA-binding</keyword>
<keyword id="KW-0699">rRNA-binding</keyword>
<keyword id="KW-0820">tRNA-binding</keyword>
<dbReference type="EMBL" id="BX548174">
    <property type="protein sequence ID" value="CAE20005.1"/>
    <property type="molecule type" value="Genomic_DNA"/>
</dbReference>
<dbReference type="RefSeq" id="WP_011133174.1">
    <property type="nucleotide sequence ID" value="NC_005072.1"/>
</dbReference>
<dbReference type="SMR" id="Q7UZV6"/>
<dbReference type="STRING" id="59919.PMM1546"/>
<dbReference type="KEGG" id="pmm:PMM1546"/>
<dbReference type="eggNOG" id="COG0094">
    <property type="taxonomic scope" value="Bacteria"/>
</dbReference>
<dbReference type="HOGENOM" id="CLU_061015_2_1_3"/>
<dbReference type="OrthoDB" id="9806626at2"/>
<dbReference type="Proteomes" id="UP000001026">
    <property type="component" value="Chromosome"/>
</dbReference>
<dbReference type="GO" id="GO:1990904">
    <property type="term" value="C:ribonucleoprotein complex"/>
    <property type="evidence" value="ECO:0007669"/>
    <property type="project" value="UniProtKB-KW"/>
</dbReference>
<dbReference type="GO" id="GO:0005840">
    <property type="term" value="C:ribosome"/>
    <property type="evidence" value="ECO:0007669"/>
    <property type="project" value="UniProtKB-KW"/>
</dbReference>
<dbReference type="GO" id="GO:0019843">
    <property type="term" value="F:rRNA binding"/>
    <property type="evidence" value="ECO:0007669"/>
    <property type="project" value="UniProtKB-UniRule"/>
</dbReference>
<dbReference type="GO" id="GO:0003735">
    <property type="term" value="F:structural constituent of ribosome"/>
    <property type="evidence" value="ECO:0007669"/>
    <property type="project" value="InterPro"/>
</dbReference>
<dbReference type="GO" id="GO:0000049">
    <property type="term" value="F:tRNA binding"/>
    <property type="evidence" value="ECO:0007669"/>
    <property type="project" value="UniProtKB-UniRule"/>
</dbReference>
<dbReference type="GO" id="GO:0006412">
    <property type="term" value="P:translation"/>
    <property type="evidence" value="ECO:0007669"/>
    <property type="project" value="UniProtKB-UniRule"/>
</dbReference>
<dbReference type="FunFam" id="3.30.1440.10:FF:000001">
    <property type="entry name" value="50S ribosomal protein L5"/>
    <property type="match status" value="1"/>
</dbReference>
<dbReference type="Gene3D" id="3.30.1440.10">
    <property type="match status" value="1"/>
</dbReference>
<dbReference type="HAMAP" id="MF_01333_B">
    <property type="entry name" value="Ribosomal_uL5_B"/>
    <property type="match status" value="1"/>
</dbReference>
<dbReference type="InterPro" id="IPR002132">
    <property type="entry name" value="Ribosomal_uL5"/>
</dbReference>
<dbReference type="InterPro" id="IPR020930">
    <property type="entry name" value="Ribosomal_uL5_bac-type"/>
</dbReference>
<dbReference type="InterPro" id="IPR031309">
    <property type="entry name" value="Ribosomal_uL5_C"/>
</dbReference>
<dbReference type="InterPro" id="IPR020929">
    <property type="entry name" value="Ribosomal_uL5_CS"/>
</dbReference>
<dbReference type="InterPro" id="IPR022803">
    <property type="entry name" value="Ribosomal_uL5_dom_sf"/>
</dbReference>
<dbReference type="InterPro" id="IPR031310">
    <property type="entry name" value="Ribosomal_uL5_N"/>
</dbReference>
<dbReference type="NCBIfam" id="NF000585">
    <property type="entry name" value="PRK00010.1"/>
    <property type="match status" value="1"/>
</dbReference>
<dbReference type="PANTHER" id="PTHR11994">
    <property type="entry name" value="60S RIBOSOMAL PROTEIN L11-RELATED"/>
    <property type="match status" value="1"/>
</dbReference>
<dbReference type="Pfam" id="PF00281">
    <property type="entry name" value="Ribosomal_L5"/>
    <property type="match status" value="1"/>
</dbReference>
<dbReference type="Pfam" id="PF00673">
    <property type="entry name" value="Ribosomal_L5_C"/>
    <property type="match status" value="1"/>
</dbReference>
<dbReference type="PIRSF" id="PIRSF002161">
    <property type="entry name" value="Ribosomal_L5"/>
    <property type="match status" value="1"/>
</dbReference>
<dbReference type="SUPFAM" id="SSF55282">
    <property type="entry name" value="RL5-like"/>
    <property type="match status" value="1"/>
</dbReference>
<dbReference type="PROSITE" id="PS00358">
    <property type="entry name" value="RIBOSOMAL_L5"/>
    <property type="match status" value="1"/>
</dbReference>
<proteinExistence type="inferred from homology"/>
<feature type="chain" id="PRO_0000124968" description="Large ribosomal subunit protein uL5">
    <location>
        <begin position="1"/>
        <end position="178"/>
    </location>
</feature>